<dbReference type="EMBL" id="EU365392">
    <property type="protein sequence ID" value="ABY66540.1"/>
    <property type="molecule type" value="Genomic_DNA"/>
</dbReference>
<dbReference type="BMRB" id="B0FYL5"/>
<dbReference type="SMR" id="B0FYL5"/>
<dbReference type="GlyCosmos" id="B0FYL5">
    <property type="glycosylation" value="2 sites, No reported glycans"/>
</dbReference>
<dbReference type="GO" id="GO:0005794">
    <property type="term" value="C:Golgi apparatus"/>
    <property type="evidence" value="ECO:0007669"/>
    <property type="project" value="UniProtKB-SubCell"/>
</dbReference>
<dbReference type="GO" id="GO:0005886">
    <property type="term" value="C:plasma membrane"/>
    <property type="evidence" value="ECO:0007669"/>
    <property type="project" value="UniProtKB-SubCell"/>
</dbReference>
<dbReference type="GO" id="GO:0098552">
    <property type="term" value="C:side of membrane"/>
    <property type="evidence" value="ECO:0007669"/>
    <property type="project" value="UniProtKB-KW"/>
</dbReference>
<dbReference type="GO" id="GO:0005507">
    <property type="term" value="F:copper ion binding"/>
    <property type="evidence" value="ECO:0000250"/>
    <property type="project" value="UniProtKB"/>
</dbReference>
<dbReference type="GO" id="GO:0051260">
    <property type="term" value="P:protein homooligomerization"/>
    <property type="evidence" value="ECO:0007669"/>
    <property type="project" value="InterPro"/>
</dbReference>
<dbReference type="FunFam" id="1.10.790.10:FF:000001">
    <property type="entry name" value="Major prion protein"/>
    <property type="match status" value="1"/>
</dbReference>
<dbReference type="Gene3D" id="1.10.790.10">
    <property type="entry name" value="Prion/Doppel protein, beta-ribbon domain"/>
    <property type="match status" value="1"/>
</dbReference>
<dbReference type="InterPro" id="IPR000817">
    <property type="entry name" value="Prion"/>
</dbReference>
<dbReference type="InterPro" id="IPR036924">
    <property type="entry name" value="Prion/Doppel_b-ribbon_dom_sf"/>
</dbReference>
<dbReference type="InterPro" id="IPR022416">
    <property type="entry name" value="Prion/Doppel_prot_b-ribbon_dom"/>
</dbReference>
<dbReference type="InterPro" id="IPR020949">
    <property type="entry name" value="Prion_copper_b_octapeptide"/>
</dbReference>
<dbReference type="InterPro" id="IPR025860">
    <property type="entry name" value="Prion_N"/>
</dbReference>
<dbReference type="PANTHER" id="PTHR15506">
    <property type="entry name" value="DOPPEL PRION"/>
    <property type="match status" value="1"/>
</dbReference>
<dbReference type="PANTHER" id="PTHR15506:SF3">
    <property type="entry name" value="MAJOR PRION PROTEIN"/>
    <property type="match status" value="1"/>
</dbReference>
<dbReference type="Pfam" id="PF00377">
    <property type="entry name" value="Prion"/>
    <property type="match status" value="1"/>
</dbReference>
<dbReference type="Pfam" id="PF11587">
    <property type="entry name" value="Prion_bPrPp"/>
    <property type="match status" value="1"/>
</dbReference>
<dbReference type="Pfam" id="PF03991">
    <property type="entry name" value="Prion_octapep"/>
    <property type="match status" value="1"/>
</dbReference>
<dbReference type="PRINTS" id="PR00341">
    <property type="entry name" value="PRION"/>
</dbReference>
<dbReference type="SMART" id="SM00157">
    <property type="entry name" value="PRP"/>
    <property type="match status" value="1"/>
</dbReference>
<dbReference type="SUPFAM" id="SSF54098">
    <property type="entry name" value="Prion-like"/>
    <property type="match status" value="1"/>
</dbReference>
<dbReference type="PROSITE" id="PS00291">
    <property type="entry name" value="PRION_1"/>
    <property type="match status" value="1"/>
</dbReference>
<dbReference type="PROSITE" id="PS00706">
    <property type="entry name" value="PRION_2"/>
    <property type="match status" value="1"/>
</dbReference>
<name>PRIO_VULLA</name>
<proteinExistence type="inferred from homology"/>
<gene>
    <name evidence="7" type="primary">PRNP</name>
</gene>
<sequence>MVKSHIGGWILLLFVATWSDVGLCKKRPKPGGWNTGGGSRYPGQGSPGGNRYPPQGGGGWGQPHGGGWGQPHGGGWGQPHGGGWGQPHGGGGWGQGGGSHGQWGKPNKPKTNMKHVAGAAAAGAVVGGLGGYMLGSAMSRPLIHFGNDYEDRYYRENMYRYPDQVYYRPVDQYSNQNNFVRDCVNITVKQHTVTTTTKGENFTETDMKIMERVVEQMCVTQYQKESEAYYQRGASAILFSPPPVILLISLLILLIVG</sequence>
<organism>
    <name type="scientific">Vulpes lagopus</name>
    <name type="common">Arctic fox</name>
    <name type="synonym">Alopex lagopus</name>
    <dbReference type="NCBI Taxonomy" id="494514"/>
    <lineage>
        <taxon>Eukaryota</taxon>
        <taxon>Metazoa</taxon>
        <taxon>Chordata</taxon>
        <taxon>Craniata</taxon>
        <taxon>Vertebrata</taxon>
        <taxon>Euteleostomi</taxon>
        <taxon>Mammalia</taxon>
        <taxon>Eutheria</taxon>
        <taxon>Laurasiatheria</taxon>
        <taxon>Carnivora</taxon>
        <taxon>Caniformia</taxon>
        <taxon>Canidae</taxon>
        <taxon>Vulpes</taxon>
    </lineage>
</organism>
<reference evidence="6 7" key="1">
    <citation type="journal article" date="2009" name="Mol. Biol. Rep.">
        <title>Polymorphism of prion protein gene in Arctic fox (Vulpes lagopus).</title>
        <authorList>
            <person name="Wan J."/>
            <person name="Bai X."/>
            <person name="Liu W."/>
            <person name="Xu J."/>
            <person name="Xu M."/>
            <person name="Gao H."/>
        </authorList>
    </citation>
    <scope>NUCLEOTIDE SEQUENCE [GENOMIC DNA]</scope>
    <scope>VARIANTS VAL-113 AND CYS-181</scope>
</reference>
<evidence type="ECO:0000250" key="1">
    <source>
        <dbReference type="UniProtKB" id="P04156"/>
    </source>
</evidence>
<evidence type="ECO:0000250" key="2">
    <source>
        <dbReference type="UniProtKB" id="P04925"/>
    </source>
</evidence>
<evidence type="ECO:0000255" key="3"/>
<evidence type="ECO:0000256" key="4">
    <source>
        <dbReference type="SAM" id="MobiDB-lite"/>
    </source>
</evidence>
<evidence type="ECO:0000269" key="5">
    <source>
    </source>
</evidence>
<evidence type="ECO:0000305" key="6"/>
<evidence type="ECO:0000312" key="7">
    <source>
        <dbReference type="EMBL" id="ABY66540.1"/>
    </source>
</evidence>
<accession>B0FYL5</accession>
<protein>
    <recommendedName>
        <fullName evidence="2">Major prion protein</fullName>
        <shortName evidence="2">PrP</shortName>
    </recommendedName>
    <cdAntigenName evidence="2">CD230</cdAntigenName>
</protein>
<feature type="signal peptide" evidence="2">
    <location>
        <begin position="1"/>
        <end position="24"/>
    </location>
</feature>
<feature type="chain" id="PRO_0000391423" description="Major prion protein" evidence="2">
    <location>
        <begin position="25"/>
        <end position="234"/>
    </location>
</feature>
<feature type="propeptide" id="PRO_0000391424" description="Removed in mature form" evidence="2">
    <location>
        <begin position="235"/>
        <end position="257"/>
    </location>
</feature>
<feature type="repeat" description="1" evidence="3">
    <location>
        <begin position="54"/>
        <end position="62"/>
    </location>
</feature>
<feature type="repeat" description="2" evidence="3">
    <location>
        <begin position="63"/>
        <end position="70"/>
    </location>
</feature>
<feature type="repeat" description="3" evidence="3">
    <location>
        <begin position="71"/>
        <end position="78"/>
    </location>
</feature>
<feature type="repeat" description="4" evidence="3">
    <location>
        <begin position="79"/>
        <end position="86"/>
    </location>
</feature>
<feature type="repeat" description="5" evidence="3">
    <location>
        <begin position="87"/>
        <end position="95"/>
    </location>
</feature>
<feature type="region of interest" description="Interaction with GRB2, ERI3 and SYN1" evidence="2">
    <location>
        <begin position="25"/>
        <end position="234"/>
    </location>
</feature>
<feature type="region of interest" description="Disordered" evidence="4">
    <location>
        <begin position="28"/>
        <end position="110"/>
    </location>
</feature>
<feature type="region of interest" description="5 X 8 AA tandem repeats of P-H-G-G-G-W-G-Q" evidence="1">
    <location>
        <begin position="54"/>
        <end position="95"/>
    </location>
</feature>
<feature type="compositionally biased region" description="Gly residues" evidence="4">
    <location>
        <begin position="33"/>
        <end position="48"/>
    </location>
</feature>
<feature type="compositionally biased region" description="Gly residues" evidence="4">
    <location>
        <begin position="55"/>
        <end position="101"/>
    </location>
</feature>
<feature type="binding site" evidence="1">
    <location>
        <position position="64"/>
    </location>
    <ligand>
        <name>Cu(2+)</name>
        <dbReference type="ChEBI" id="CHEBI:29036"/>
        <label>1</label>
    </ligand>
</feature>
<feature type="binding site" evidence="1">
    <location>
        <position position="65"/>
    </location>
    <ligand>
        <name>Cu(2+)</name>
        <dbReference type="ChEBI" id="CHEBI:29036"/>
        <label>1</label>
    </ligand>
</feature>
<feature type="binding site" evidence="1">
    <location>
        <position position="66"/>
    </location>
    <ligand>
        <name>Cu(2+)</name>
        <dbReference type="ChEBI" id="CHEBI:29036"/>
        <label>1</label>
    </ligand>
</feature>
<feature type="binding site" evidence="1">
    <location>
        <position position="72"/>
    </location>
    <ligand>
        <name>Cu(2+)</name>
        <dbReference type="ChEBI" id="CHEBI:29036"/>
        <label>2</label>
    </ligand>
</feature>
<feature type="binding site" evidence="1">
    <location>
        <position position="73"/>
    </location>
    <ligand>
        <name>Cu(2+)</name>
        <dbReference type="ChEBI" id="CHEBI:29036"/>
        <label>2</label>
    </ligand>
</feature>
<feature type="binding site" evidence="1">
    <location>
        <position position="74"/>
    </location>
    <ligand>
        <name>Cu(2+)</name>
        <dbReference type="ChEBI" id="CHEBI:29036"/>
        <label>2</label>
    </ligand>
</feature>
<feature type="binding site" evidence="1">
    <location>
        <position position="80"/>
    </location>
    <ligand>
        <name>Cu(2+)</name>
        <dbReference type="ChEBI" id="CHEBI:29036"/>
        <label>3</label>
    </ligand>
</feature>
<feature type="binding site" evidence="1">
    <location>
        <position position="81"/>
    </location>
    <ligand>
        <name>Cu(2+)</name>
        <dbReference type="ChEBI" id="CHEBI:29036"/>
        <label>3</label>
    </ligand>
</feature>
<feature type="binding site" evidence="1">
    <location>
        <position position="82"/>
    </location>
    <ligand>
        <name>Cu(2+)</name>
        <dbReference type="ChEBI" id="CHEBI:29036"/>
        <label>3</label>
    </ligand>
</feature>
<feature type="binding site" evidence="1">
    <location>
        <position position="88"/>
    </location>
    <ligand>
        <name>Cu(2+)</name>
        <dbReference type="ChEBI" id="CHEBI:29036"/>
        <label>4</label>
    </ligand>
</feature>
<feature type="binding site" evidence="1">
    <location>
        <position position="90"/>
    </location>
    <ligand>
        <name>Cu(2+)</name>
        <dbReference type="ChEBI" id="CHEBI:29036"/>
        <label>4</label>
    </ligand>
</feature>
<feature type="binding site" evidence="1">
    <location>
        <position position="91"/>
    </location>
    <ligand>
        <name>Cu(2+)</name>
        <dbReference type="ChEBI" id="CHEBI:29036"/>
        <label>4</label>
    </ligand>
</feature>
<feature type="lipid moiety-binding region" description="GPI-anchor amidated alanine" evidence="3">
    <location>
        <position position="234"/>
    </location>
</feature>
<feature type="glycosylation site" description="N-linked (GlcNAc...) asparagine" evidence="3">
    <location>
        <position position="185"/>
    </location>
</feature>
<feature type="glycosylation site" description="N-linked (GlcNAc...) asparagine" evidence="2">
    <location>
        <position position="201"/>
    </location>
</feature>
<feature type="disulfide bond" evidence="2">
    <location>
        <begin position="183"/>
        <end position="218"/>
    </location>
</feature>
<feature type="sequence variant" evidence="5">
    <original>M</original>
    <variation>V</variation>
    <location>
        <position position="113"/>
    </location>
</feature>
<feature type="sequence variant" evidence="5">
    <original>R</original>
    <variation>C</variation>
    <location>
        <position position="181"/>
    </location>
</feature>
<keyword id="KW-0034">Amyloid</keyword>
<keyword id="KW-1003">Cell membrane</keyword>
<keyword id="KW-0186">Copper</keyword>
<keyword id="KW-1015">Disulfide bond</keyword>
<keyword id="KW-0325">Glycoprotein</keyword>
<keyword id="KW-0333">Golgi apparatus</keyword>
<keyword id="KW-0336">GPI-anchor</keyword>
<keyword id="KW-0449">Lipoprotein</keyword>
<keyword id="KW-0472">Membrane</keyword>
<keyword id="KW-0479">Metal-binding</keyword>
<keyword id="KW-0640">Prion</keyword>
<keyword id="KW-0677">Repeat</keyword>
<keyword id="KW-0732">Signal</keyword>
<keyword id="KW-0862">Zinc</keyword>
<comment type="function">
    <text evidence="1 2">Its primary physiological function is unclear. Has cytoprotective activity against internal or environmental stresses. May play a role in neuronal development and synaptic plasticity. May be required for neuronal myelin sheath maintenance. May play a role in iron uptake and iron homeostasis. Soluble oligomers are toxic to cultured neuroblastoma cells and induce apoptosis (in vitro). Association with GPC1 (via its heparan sulfate chains) targets PRNP to lipid rafts. Also provides Cu(2+) or Zn(2+) for the ascorbate-mediated GPC1 deaminase degradation of its heparan sulfate side chains (By similarity).</text>
</comment>
<comment type="subunit">
    <text evidence="1 2">Monomer and homodimer. Has a tendency to aggregate into amyloid fibrils containing a cross-beta spine, formed by a steric zipper of superposed beta-strands. Soluble oligomers may represent an intermediate stage on the path to fibril formation. Copper binding may promote oligomerization. Interacts with GRB2, APP, ERI3/PRNPIP and SYN1. Mislocalized cytosolically exposed PrP interacts with MGRN1; this interaction alters MGRN1 subcellular location and causes lysosomal enlargement. Interacts with KIAA1191.</text>
</comment>
<comment type="subcellular location">
    <subcellularLocation>
        <location evidence="1">Cell membrane</location>
        <topology evidence="1">Lipid-anchor</topology>
        <topology evidence="1">GPI-anchor</topology>
    </subcellularLocation>
    <subcellularLocation>
        <location evidence="2">Golgi apparatus</location>
    </subcellularLocation>
    <text evidence="1">Targeted to lipid rafts via association with the heparan sulfate chains of GPC1. Colocates, in the presence of Cu(2+), to vesicles in para- and perinuclear regions, where both proteins undergo internalization. Heparin displaces PRNP from lipid rafts and promotes endocytosis.</text>
</comment>
<comment type="domain">
    <text evidence="1">The normal, monomeric form has a mainly alpha-helical structure. The disease-associated, protease-resistant form forms amyloid fibrils containing a cross-beta spine, formed by a steric zipper of superposed beta-strands. Disease mutations may favor intermolecular contacts via short beta strands, and may thereby trigger oligomerization.</text>
</comment>
<comment type="domain">
    <text evidence="1">Contains an N-terminal region composed of octamer repeats. At low copper concentrations, the sidechains of His residues from three or four repeats contribute to the binding of a single copper ion. Alternatively, a copper ion can be bound by interaction with the sidechain and backbone amide nitrogen of a single His residue. The observed copper binding stoichiometry suggests that two repeat regions cooperate to stabilize the binding of a single copper ion. At higher copper concentrations, each octamer can bind one copper ion by interactions with the His sidechain and Gly backbone atoms. A mixture of binding types may occur, especially in the case of octamer repeat expansion. Copper binding may stabilize the conformation of this region and may promote oligomerization.</text>
</comment>
<comment type="disease">
    <text evidence="6">PrP is found in high quantity in the brain of humans and animals infected with the degenerative neurological diseases kuru, Creutzfeldt-Jakob disease (CJD), Gerstmann-Straussler syndrome (GSS), scrapie, bovine spongiform encephalopathy (BSE), transmissible mink encephalopathy (TME), etc.</text>
</comment>
<comment type="similarity">
    <text evidence="6">Belongs to the prion family.</text>
</comment>